<name>UPPP_LEUCK</name>
<organism>
    <name type="scientific">Leuconostoc citreum (strain KM20)</name>
    <dbReference type="NCBI Taxonomy" id="349519"/>
    <lineage>
        <taxon>Bacteria</taxon>
        <taxon>Bacillati</taxon>
        <taxon>Bacillota</taxon>
        <taxon>Bacilli</taxon>
        <taxon>Lactobacillales</taxon>
        <taxon>Lactobacillaceae</taxon>
        <taxon>Leuconostoc</taxon>
    </lineage>
</organism>
<feature type="chain" id="PRO_1000197381" description="Undecaprenyl-diphosphatase">
    <location>
        <begin position="1"/>
        <end position="282"/>
    </location>
</feature>
<feature type="transmembrane region" description="Helical" evidence="1">
    <location>
        <begin position="2"/>
        <end position="22"/>
    </location>
</feature>
<feature type="transmembrane region" description="Helical" evidence="1">
    <location>
        <begin position="47"/>
        <end position="67"/>
    </location>
</feature>
<feature type="transmembrane region" description="Helical" evidence="1">
    <location>
        <begin position="90"/>
        <end position="110"/>
    </location>
</feature>
<feature type="transmembrane region" description="Helical" evidence="1">
    <location>
        <begin position="115"/>
        <end position="135"/>
    </location>
</feature>
<feature type="transmembrane region" description="Helical" evidence="1">
    <location>
        <begin position="152"/>
        <end position="172"/>
    </location>
</feature>
<feature type="transmembrane region" description="Helical" evidence="1">
    <location>
        <begin position="190"/>
        <end position="210"/>
    </location>
</feature>
<feature type="transmembrane region" description="Helical" evidence="1">
    <location>
        <begin position="225"/>
        <end position="245"/>
    </location>
</feature>
<feature type="transmembrane region" description="Helical" evidence="1">
    <location>
        <begin position="259"/>
        <end position="279"/>
    </location>
</feature>
<keyword id="KW-0046">Antibiotic resistance</keyword>
<keyword id="KW-1003">Cell membrane</keyword>
<keyword id="KW-0133">Cell shape</keyword>
<keyword id="KW-0961">Cell wall biogenesis/degradation</keyword>
<keyword id="KW-0378">Hydrolase</keyword>
<keyword id="KW-0472">Membrane</keyword>
<keyword id="KW-0573">Peptidoglycan synthesis</keyword>
<keyword id="KW-1185">Reference proteome</keyword>
<keyword id="KW-0812">Transmembrane</keyword>
<keyword id="KW-1133">Transmembrane helix</keyword>
<comment type="function">
    <text evidence="1">Catalyzes the dephosphorylation of undecaprenyl diphosphate (UPP). Confers resistance to bacitracin.</text>
</comment>
<comment type="catalytic activity">
    <reaction evidence="1">
        <text>di-trans,octa-cis-undecaprenyl diphosphate + H2O = di-trans,octa-cis-undecaprenyl phosphate + phosphate + H(+)</text>
        <dbReference type="Rhea" id="RHEA:28094"/>
        <dbReference type="ChEBI" id="CHEBI:15377"/>
        <dbReference type="ChEBI" id="CHEBI:15378"/>
        <dbReference type="ChEBI" id="CHEBI:43474"/>
        <dbReference type="ChEBI" id="CHEBI:58405"/>
        <dbReference type="ChEBI" id="CHEBI:60392"/>
        <dbReference type="EC" id="3.6.1.27"/>
    </reaction>
</comment>
<comment type="subcellular location">
    <subcellularLocation>
        <location evidence="1">Cell membrane</location>
        <topology evidence="1">Multi-pass membrane protein</topology>
    </subcellularLocation>
</comment>
<comment type="miscellaneous">
    <text>Bacitracin is thought to be involved in the inhibition of peptidoglycan synthesis by sequestering undecaprenyl diphosphate, thereby reducing the pool of lipid carrier available.</text>
</comment>
<comment type="similarity">
    <text evidence="1">Belongs to the UppP family.</text>
</comment>
<protein>
    <recommendedName>
        <fullName evidence="1">Undecaprenyl-diphosphatase</fullName>
        <ecNumber evidence="1">3.6.1.27</ecNumber>
    </recommendedName>
    <alternativeName>
        <fullName evidence="1">Bacitracin resistance protein</fullName>
    </alternativeName>
    <alternativeName>
        <fullName evidence="1">Undecaprenyl pyrophosphate phosphatase</fullName>
    </alternativeName>
</protein>
<proteinExistence type="inferred from homology"/>
<reference key="1">
    <citation type="journal article" date="2008" name="J. Bacteriol.">
        <title>Complete genome sequence of Leuconostoc citreum KM20.</title>
        <authorList>
            <person name="Kim J.F."/>
            <person name="Jeong H."/>
            <person name="Lee J.-S."/>
            <person name="Choi S.-H."/>
            <person name="Ha M."/>
            <person name="Hur C.-G."/>
            <person name="Kim J.-S."/>
            <person name="Lee S."/>
            <person name="Park H.-S."/>
            <person name="Park Y.-H."/>
            <person name="Oh T.K."/>
        </authorList>
    </citation>
    <scope>NUCLEOTIDE SEQUENCE [LARGE SCALE GENOMIC DNA]</scope>
    <source>
        <strain>KM20</strain>
    </source>
</reference>
<evidence type="ECO:0000255" key="1">
    <source>
        <dbReference type="HAMAP-Rule" id="MF_01006"/>
    </source>
</evidence>
<gene>
    <name evidence="1" type="primary">uppP</name>
    <name type="ordered locus">LCK_01638</name>
</gene>
<sequence>MFDFIKSIIIGIVEGLTEFLPVSSTGHIILAEALMKIPGGMVWTKSFTAVFDYAIQLGAIFAVIQLYFHKLNPFSPRKTSREQFQTWRLWIKVIVGVLPAMVFGLLLNNFMDAHLLNPWVVSATLIIYGIAFIVIENRQKNIAPVVTEVNRITFKMALFIGLFQVLSLVPGTSRSGATILGAVILGASRFVAAEFSFFLSIPVMFGVTILKVGSFLLKGGSFTGAQLFVMLIGFVVSWVVALFAIKVMMRYIQNNDFKIFGWYRIVVGILFLILGIAGLVKM</sequence>
<dbReference type="EC" id="3.6.1.27" evidence="1"/>
<dbReference type="EMBL" id="DQ489736">
    <property type="protein sequence ID" value="ACA83461.1"/>
    <property type="molecule type" value="Genomic_DNA"/>
</dbReference>
<dbReference type="RefSeq" id="WP_004902081.1">
    <property type="nucleotide sequence ID" value="NC_010471.1"/>
</dbReference>
<dbReference type="SMR" id="B1MW96"/>
<dbReference type="STRING" id="349519.LCK_01638"/>
<dbReference type="KEGG" id="lci:LCK_01638"/>
<dbReference type="eggNOG" id="COG1968">
    <property type="taxonomic scope" value="Bacteria"/>
</dbReference>
<dbReference type="HOGENOM" id="CLU_060296_2_0_9"/>
<dbReference type="OrthoDB" id="9808289at2"/>
<dbReference type="Proteomes" id="UP000002166">
    <property type="component" value="Chromosome"/>
</dbReference>
<dbReference type="GO" id="GO:0005886">
    <property type="term" value="C:plasma membrane"/>
    <property type="evidence" value="ECO:0007669"/>
    <property type="project" value="UniProtKB-SubCell"/>
</dbReference>
<dbReference type="GO" id="GO:0050380">
    <property type="term" value="F:undecaprenyl-diphosphatase activity"/>
    <property type="evidence" value="ECO:0007669"/>
    <property type="project" value="UniProtKB-UniRule"/>
</dbReference>
<dbReference type="GO" id="GO:0071555">
    <property type="term" value="P:cell wall organization"/>
    <property type="evidence" value="ECO:0007669"/>
    <property type="project" value="UniProtKB-KW"/>
</dbReference>
<dbReference type="GO" id="GO:0009252">
    <property type="term" value="P:peptidoglycan biosynthetic process"/>
    <property type="evidence" value="ECO:0007669"/>
    <property type="project" value="UniProtKB-KW"/>
</dbReference>
<dbReference type="GO" id="GO:0008360">
    <property type="term" value="P:regulation of cell shape"/>
    <property type="evidence" value="ECO:0007669"/>
    <property type="project" value="UniProtKB-KW"/>
</dbReference>
<dbReference type="GO" id="GO:0046677">
    <property type="term" value="P:response to antibiotic"/>
    <property type="evidence" value="ECO:0007669"/>
    <property type="project" value="UniProtKB-UniRule"/>
</dbReference>
<dbReference type="HAMAP" id="MF_01006">
    <property type="entry name" value="Undec_diphosphatase"/>
    <property type="match status" value="1"/>
</dbReference>
<dbReference type="InterPro" id="IPR003824">
    <property type="entry name" value="UppP"/>
</dbReference>
<dbReference type="NCBIfam" id="NF001391">
    <property type="entry name" value="PRK00281.1-5"/>
    <property type="match status" value="1"/>
</dbReference>
<dbReference type="PANTHER" id="PTHR30622">
    <property type="entry name" value="UNDECAPRENYL-DIPHOSPHATASE"/>
    <property type="match status" value="1"/>
</dbReference>
<dbReference type="PANTHER" id="PTHR30622:SF3">
    <property type="entry name" value="UNDECAPRENYL-DIPHOSPHATASE"/>
    <property type="match status" value="1"/>
</dbReference>
<dbReference type="Pfam" id="PF02673">
    <property type="entry name" value="BacA"/>
    <property type="match status" value="1"/>
</dbReference>
<accession>B1MW96</accession>